<keyword id="KW-1003">Cell membrane</keyword>
<keyword id="KW-1015">Disulfide bond</keyword>
<keyword id="KW-0297">G-protein coupled receptor</keyword>
<keyword id="KW-0325">Glycoprotein</keyword>
<keyword id="KW-0472">Membrane</keyword>
<keyword id="KW-0675">Receptor</keyword>
<keyword id="KW-1185">Reference proteome</keyword>
<keyword id="KW-0732">Signal</keyword>
<keyword id="KW-0807">Transducer</keyword>
<keyword id="KW-0812">Transmembrane</keyword>
<keyword id="KW-1133">Transmembrane helix</keyword>
<evidence type="ECO:0000250" key="1"/>
<evidence type="ECO:0000255" key="2"/>
<evidence type="ECO:0000269" key="3">
    <source>
    </source>
</evidence>
<evidence type="ECO:0000305" key="4"/>
<proteinExistence type="inferred from homology"/>
<sequence length="420" mass="48600">MVPGPRPALLLLLFLLQAFLLWDSPVAASIQEQYCESLLPTTNHTGPQCNASVDLIGTCWPRSAVGQLVARPCPEYFYGVRYNTTNNGYRECLANGSWAARVNYSQCQEILSEEKRSKLHYHIAVIINYLGHCVSLGTLLVAFVLFMRLRSIRCLRNIIHWNLITAFILRNATWFVVQLTMNPEVHESNVVWCRLVTAAYNYFHVTNFFWMFGEGCYLHTAIVLTYSTDKLRKWMFICIGWCIPFPIIVAWAIGKLYYDNEKCWFGKRAGVYTDYIYQGPMILVLLINFIFLFNIVRILMTKLRASTTSETIQYRKAVKATLVLLSLLGITYMLFFVNPGEDEISRIVFIYFNSFLESFQGFFVSVFYCFLNSEVRSAVRKRWHRWQDKHSIRARVARAMSIPTSPTRVSFHSIKQSSAV</sequence>
<dbReference type="EMBL" id="L41563">
    <property type="protein sequence ID" value="AAA96656.1"/>
    <property type="molecule type" value="Genomic_DNA"/>
</dbReference>
<dbReference type="RefSeq" id="NP_989652.1">
    <property type="nucleotide sequence ID" value="NM_204321.1"/>
</dbReference>
<dbReference type="SMR" id="Q90812"/>
<dbReference type="FunCoup" id="Q90812">
    <property type="interactions" value="249"/>
</dbReference>
<dbReference type="STRING" id="9031.ENSGALP00000000502"/>
<dbReference type="GlyCosmos" id="Q90812">
    <property type="glycosylation" value="5 sites, No reported glycans"/>
</dbReference>
<dbReference type="GlyGen" id="Q90812">
    <property type="glycosylation" value="5 sites"/>
</dbReference>
<dbReference type="PaxDb" id="9031-ENSGALP00000000502"/>
<dbReference type="GeneID" id="374218"/>
<dbReference type="KEGG" id="gga:374218"/>
<dbReference type="CTD" id="1394"/>
<dbReference type="VEuPathDB" id="HostDB:geneid_374218"/>
<dbReference type="eggNOG" id="KOG4564">
    <property type="taxonomic scope" value="Eukaryota"/>
</dbReference>
<dbReference type="InParanoid" id="Q90812"/>
<dbReference type="OrthoDB" id="6022368at2759"/>
<dbReference type="PhylomeDB" id="Q90812"/>
<dbReference type="PRO" id="PR:Q90812"/>
<dbReference type="Proteomes" id="UP000000539">
    <property type="component" value="Unassembled WGS sequence"/>
</dbReference>
<dbReference type="GO" id="GO:0043005">
    <property type="term" value="C:neuron projection"/>
    <property type="evidence" value="ECO:0000318"/>
    <property type="project" value="GO_Central"/>
</dbReference>
<dbReference type="GO" id="GO:0005886">
    <property type="term" value="C:plasma membrane"/>
    <property type="evidence" value="ECO:0000250"/>
    <property type="project" value="UniProtKB"/>
</dbReference>
<dbReference type="GO" id="GO:0015056">
    <property type="term" value="F:corticotrophin-releasing factor receptor activity"/>
    <property type="evidence" value="ECO:0000250"/>
    <property type="project" value="UniProtKB"/>
</dbReference>
<dbReference type="GO" id="GO:0051424">
    <property type="term" value="F:corticotropin-releasing hormone binding"/>
    <property type="evidence" value="ECO:0000318"/>
    <property type="project" value="GO_Central"/>
</dbReference>
<dbReference type="GO" id="GO:0043404">
    <property type="term" value="F:corticotropin-releasing hormone receptor activity"/>
    <property type="evidence" value="ECO:0000318"/>
    <property type="project" value="GO_Central"/>
</dbReference>
<dbReference type="GO" id="GO:0008528">
    <property type="term" value="F:G protein-coupled peptide receptor activity"/>
    <property type="evidence" value="ECO:0000318"/>
    <property type="project" value="GO_Central"/>
</dbReference>
<dbReference type="GO" id="GO:0007189">
    <property type="term" value="P:adenylate cyclase-activating G protein-coupled receptor signaling pathway"/>
    <property type="evidence" value="ECO:0000250"/>
    <property type="project" value="UniProtKB"/>
</dbReference>
<dbReference type="GO" id="GO:0007166">
    <property type="term" value="P:cell surface receptor signaling pathway"/>
    <property type="evidence" value="ECO:0007669"/>
    <property type="project" value="InterPro"/>
</dbReference>
<dbReference type="GO" id="GO:0071376">
    <property type="term" value="P:cellular response to corticotropin-releasing hormone stimulus"/>
    <property type="evidence" value="ECO:0000250"/>
    <property type="project" value="UniProtKB"/>
</dbReference>
<dbReference type="GO" id="GO:0051458">
    <property type="term" value="P:corticotropin secretion"/>
    <property type="evidence" value="ECO:0000250"/>
    <property type="project" value="UniProtKB"/>
</dbReference>
<dbReference type="GO" id="GO:2000852">
    <property type="term" value="P:regulation of corticosterone secretion"/>
    <property type="evidence" value="ECO:0000250"/>
    <property type="project" value="UniProtKB"/>
</dbReference>
<dbReference type="CDD" id="cd15445">
    <property type="entry name" value="7tmB1_CRF-R1"/>
    <property type="match status" value="1"/>
</dbReference>
<dbReference type="FunFam" id="1.20.1070.10:FF:000021">
    <property type="entry name" value="Corticotropin releasing factor receptor 2"/>
    <property type="match status" value="1"/>
</dbReference>
<dbReference type="FunFam" id="4.10.1240.10:FF:000007">
    <property type="entry name" value="Corticotropin-releasing factor receptor 1"/>
    <property type="match status" value="1"/>
</dbReference>
<dbReference type="Gene3D" id="4.10.1240.10">
    <property type="entry name" value="GPCR, family 2, extracellular hormone receptor domain"/>
    <property type="match status" value="1"/>
</dbReference>
<dbReference type="Gene3D" id="1.20.1070.10">
    <property type="entry name" value="Rhodopsin 7-helix transmembrane proteins"/>
    <property type="match status" value="1"/>
</dbReference>
<dbReference type="InterPro" id="IPR050332">
    <property type="entry name" value="GPCR_2"/>
</dbReference>
<dbReference type="InterPro" id="IPR017981">
    <property type="entry name" value="GPCR_2-like_7TM"/>
</dbReference>
<dbReference type="InterPro" id="IPR003052">
    <property type="entry name" value="GPCR_2_CRF1_rcpt"/>
</dbReference>
<dbReference type="InterPro" id="IPR003051">
    <property type="entry name" value="GPCR_2_CRF_rcpt"/>
</dbReference>
<dbReference type="InterPro" id="IPR036445">
    <property type="entry name" value="GPCR_2_extracell_dom_sf"/>
</dbReference>
<dbReference type="InterPro" id="IPR001879">
    <property type="entry name" value="GPCR_2_extracellular_dom"/>
</dbReference>
<dbReference type="InterPro" id="IPR000832">
    <property type="entry name" value="GPCR_2_secretin-like"/>
</dbReference>
<dbReference type="InterPro" id="IPR017983">
    <property type="entry name" value="GPCR_2_secretin-like_CS"/>
</dbReference>
<dbReference type="PANTHER" id="PTHR45620:SF2">
    <property type="entry name" value="CORTICOTROPIN-RELEASING FACTOR RECEPTOR 1"/>
    <property type="match status" value="1"/>
</dbReference>
<dbReference type="PANTHER" id="PTHR45620">
    <property type="entry name" value="PDF RECEPTOR-LIKE PROTEIN-RELATED"/>
    <property type="match status" value="1"/>
</dbReference>
<dbReference type="Pfam" id="PF00002">
    <property type="entry name" value="7tm_2"/>
    <property type="match status" value="1"/>
</dbReference>
<dbReference type="Pfam" id="PF02793">
    <property type="entry name" value="HRM"/>
    <property type="match status" value="1"/>
</dbReference>
<dbReference type="PRINTS" id="PR01279">
    <property type="entry name" value="CRFRECEPTOR"/>
</dbReference>
<dbReference type="PRINTS" id="PR01280">
    <property type="entry name" value="CRFRECEPTOR1"/>
</dbReference>
<dbReference type="PRINTS" id="PR00249">
    <property type="entry name" value="GPCRSECRETIN"/>
</dbReference>
<dbReference type="SMART" id="SM00008">
    <property type="entry name" value="HormR"/>
    <property type="match status" value="1"/>
</dbReference>
<dbReference type="SUPFAM" id="SSF81321">
    <property type="entry name" value="Family A G protein-coupled receptor-like"/>
    <property type="match status" value="1"/>
</dbReference>
<dbReference type="SUPFAM" id="SSF111418">
    <property type="entry name" value="Hormone receptor domain"/>
    <property type="match status" value="1"/>
</dbReference>
<dbReference type="PROSITE" id="PS00649">
    <property type="entry name" value="G_PROTEIN_RECEP_F2_1"/>
    <property type="match status" value="1"/>
</dbReference>
<dbReference type="PROSITE" id="PS00650">
    <property type="entry name" value="G_PROTEIN_RECEP_F2_2"/>
    <property type="match status" value="1"/>
</dbReference>
<dbReference type="PROSITE" id="PS50227">
    <property type="entry name" value="G_PROTEIN_RECEP_F2_3"/>
    <property type="match status" value="1"/>
</dbReference>
<dbReference type="PROSITE" id="PS50261">
    <property type="entry name" value="G_PROTEIN_RECEP_F2_4"/>
    <property type="match status" value="1"/>
</dbReference>
<feature type="signal peptide" evidence="2">
    <location>
        <begin position="1"/>
        <end position="28"/>
    </location>
</feature>
<feature type="chain" id="PRO_0000012818" description="Corticotropin-releasing factor receptor 1">
    <location>
        <begin position="29"/>
        <end position="420"/>
    </location>
</feature>
<feature type="topological domain" description="Extracellular" evidence="1">
    <location>
        <begin position="29"/>
        <end position="116"/>
    </location>
</feature>
<feature type="transmembrane region" description="Helical; Name=1" evidence="1">
    <location>
        <begin position="117"/>
        <end position="147"/>
    </location>
</feature>
<feature type="topological domain" description="Cytoplasmic" evidence="1">
    <location>
        <begin position="148"/>
        <end position="154"/>
    </location>
</feature>
<feature type="transmembrane region" description="Helical; Name=2" evidence="1">
    <location>
        <begin position="155"/>
        <end position="179"/>
    </location>
</feature>
<feature type="topological domain" description="Extracellular" evidence="1">
    <location>
        <begin position="180"/>
        <end position="194"/>
    </location>
</feature>
<feature type="transmembrane region" description="Helical; Name=3" evidence="1">
    <location>
        <begin position="195"/>
        <end position="223"/>
    </location>
</feature>
<feature type="topological domain" description="Cytoplasmic" evidence="1">
    <location>
        <begin position="224"/>
        <end position="230"/>
    </location>
</feature>
<feature type="transmembrane region" description="Helical; Name=4" evidence="1">
    <location>
        <begin position="231"/>
        <end position="258"/>
    </location>
</feature>
<feature type="topological domain" description="Extracellular" evidence="1">
    <location>
        <begin position="259"/>
        <end position="274"/>
    </location>
</feature>
<feature type="transmembrane region" description="Helical; Name=5" evidence="1">
    <location>
        <begin position="275"/>
        <end position="300"/>
    </location>
</feature>
<feature type="topological domain" description="Cytoplasmic" evidence="1">
    <location>
        <begin position="301"/>
        <end position="311"/>
    </location>
</feature>
<feature type="transmembrane region" description="Helical; Name=6" evidence="1">
    <location>
        <begin position="312"/>
        <end position="336"/>
    </location>
</feature>
<feature type="topological domain" description="Extracellular" evidence="1">
    <location>
        <begin position="337"/>
        <end position="343"/>
    </location>
</feature>
<feature type="transmembrane region" description="Helical; Name=7" evidence="1">
    <location>
        <begin position="344"/>
        <end position="373"/>
    </location>
</feature>
<feature type="topological domain" description="Cytoplasmic" evidence="1">
    <location>
        <begin position="374"/>
        <end position="420"/>
    </location>
</feature>
<feature type="glycosylation site" description="N-linked (GlcNAc...) asparagine" evidence="2">
    <location>
        <position position="43"/>
    </location>
</feature>
<feature type="glycosylation site" description="N-linked (GlcNAc...) asparagine" evidence="2">
    <location>
        <position position="50"/>
    </location>
</feature>
<feature type="glycosylation site" description="N-linked (GlcNAc...) asparagine" evidence="2">
    <location>
        <position position="83"/>
    </location>
</feature>
<feature type="glycosylation site" description="N-linked (GlcNAc...) asparagine" evidence="2">
    <location>
        <position position="95"/>
    </location>
</feature>
<feature type="glycosylation site" description="N-linked (GlcNAc...) asparagine" evidence="2">
    <location>
        <position position="103"/>
    </location>
</feature>
<feature type="disulfide bond" evidence="1">
    <location>
        <begin position="35"/>
        <end position="59"/>
    </location>
</feature>
<feature type="disulfide bond" evidence="1">
    <location>
        <begin position="49"/>
        <end position="92"/>
    </location>
</feature>
<feature type="disulfide bond" evidence="1">
    <location>
        <begin position="73"/>
        <end position="107"/>
    </location>
</feature>
<feature type="disulfide bond" evidence="1">
    <location>
        <begin position="193"/>
        <end position="263"/>
    </location>
</feature>
<accession>Q90812</accession>
<name>CRFR1_CHICK</name>
<protein>
    <recommendedName>
        <fullName>Corticotropin-releasing factor receptor 1</fullName>
        <shortName>CRF-R-1</shortName>
        <shortName>CRF-R1</shortName>
        <shortName>CRFR-1</shortName>
    </recommendedName>
    <alternativeName>
        <fullName>Corticotropin-releasing hormone receptor 1</fullName>
        <shortName>CRH-R-1</shortName>
        <shortName>CRH-R1</shortName>
    </alternativeName>
</protein>
<gene>
    <name type="primary">CRHR1</name>
</gene>
<reference key="1">
    <citation type="journal article" date="1996" name="Endocrinology">
        <title>Molecular cloning of a type A chicken corticotropin-releasing factor receptor with high affinity for urotensin I.</title>
        <authorList>
            <person name="Yu J."/>
            <person name="Xie L.Y."/>
            <person name="Abou-Samra A.-B."/>
        </authorList>
    </citation>
    <scope>NUCLEOTIDE SEQUENCE [GENOMIC DNA]</scope>
    <scope>SUBCELLULAR LOCATION</scope>
    <scope>FUNCTION</scope>
</reference>
<comment type="function">
    <text evidence="3">G-protein coupled receptor for CRH (corticotropin-releasing factor) and UCN (urocortin). Has high affinity for CRH and UCN. Ligand binding causes a conformation change that triggers signaling via guanine nucleotide-binding proteins (G proteins) and down-stream effectors, such as adenylate cyclase. Promotes the activation of adenylate cyclase, leading to increased intracellular cAMP levels.</text>
</comment>
<comment type="subunit">
    <text evidence="1">Interacts (via N-terminal extracellular domain) with CRF and UCN.</text>
</comment>
<comment type="subcellular location">
    <subcellularLocation>
        <location evidence="3">Cell membrane</location>
        <topology evidence="3">Multi-pass membrane protein</topology>
    </subcellularLocation>
</comment>
<comment type="domain">
    <text evidence="1">The transmembrane domain is composed of seven transmembrane helices that are arranged in V-shape. Transmembrane helix 7 assumes a sharply kinked structure (By similarity).</text>
</comment>
<comment type="similarity">
    <text evidence="4">Belongs to the G-protein coupled receptor 2 family.</text>
</comment>
<organism>
    <name type="scientific">Gallus gallus</name>
    <name type="common">Chicken</name>
    <dbReference type="NCBI Taxonomy" id="9031"/>
    <lineage>
        <taxon>Eukaryota</taxon>
        <taxon>Metazoa</taxon>
        <taxon>Chordata</taxon>
        <taxon>Craniata</taxon>
        <taxon>Vertebrata</taxon>
        <taxon>Euteleostomi</taxon>
        <taxon>Archelosauria</taxon>
        <taxon>Archosauria</taxon>
        <taxon>Dinosauria</taxon>
        <taxon>Saurischia</taxon>
        <taxon>Theropoda</taxon>
        <taxon>Coelurosauria</taxon>
        <taxon>Aves</taxon>
        <taxon>Neognathae</taxon>
        <taxon>Galloanserae</taxon>
        <taxon>Galliformes</taxon>
        <taxon>Phasianidae</taxon>
        <taxon>Phasianinae</taxon>
        <taxon>Gallus</taxon>
    </lineage>
</organism>